<proteinExistence type="predicted"/>
<protein>
    <recommendedName>
        <fullName>Uncharacterized protein y4jO</fullName>
    </recommendedName>
</protein>
<accession>P55515</accession>
<keyword id="KW-0614">Plasmid</keyword>
<keyword id="KW-1185">Reference proteome</keyword>
<sequence length="321" mass="36099">MLHAGLVSAPYITVDDTGARHARDSFHTTQIGAEHFTAFRTTASKSRLNFLSLLRGSYQDYVLNDAAFDYLDGRRADPALVAKIRSHEPRRFCDQVPFLEYLAGKGIDIFDRQAVRVLAEAGIWGSIRHHGLLGDTVIVSDDAGQFRVGNHALCWVYAERLLQKLMPATPRQVRQVEAVRDLVWRFYRALKSVKRKPPPGLAAAFRKRFARIFSLRTGYEDLDKLLARLSRRKDELLKVLERPDIPLHTNASENDLRSFVTKRKISGGTMSRDGRVARDTMLGLMKTCKKLGLSFWHYLGDRLGLDGQAIAPLAALVAAKA</sequence>
<gene>
    <name type="ordered locus">NGR_a03000</name>
    <name type="ORF">y4jO</name>
</gene>
<name>Y4JO_SINFN</name>
<dbReference type="EMBL" id="U00090">
    <property type="protein sequence ID" value="AAB91727.1"/>
    <property type="molecule type" value="Genomic_DNA"/>
</dbReference>
<dbReference type="PIR" id="T28642">
    <property type="entry name" value="T28642"/>
</dbReference>
<dbReference type="RefSeq" id="NP_443925.1">
    <property type="nucleotide sequence ID" value="NC_000914.2"/>
</dbReference>
<dbReference type="SMR" id="P55515"/>
<dbReference type="KEGG" id="rhi:NGR_a03000"/>
<dbReference type="PATRIC" id="fig|394.7.peg.314"/>
<dbReference type="eggNOG" id="COG4467">
    <property type="taxonomic scope" value="Bacteria"/>
</dbReference>
<dbReference type="HOGENOM" id="CLU_039724_0_0_5"/>
<dbReference type="OrthoDB" id="7773346at2"/>
<dbReference type="Proteomes" id="UP000001054">
    <property type="component" value="Plasmid pNGR234a"/>
</dbReference>
<dbReference type="InterPro" id="IPR052344">
    <property type="entry name" value="Transposase-related"/>
</dbReference>
<dbReference type="InterPro" id="IPR004291">
    <property type="entry name" value="Transposase_IS66_central"/>
</dbReference>
<dbReference type="PANTHER" id="PTHR33678">
    <property type="entry name" value="BLL1576 PROTEIN"/>
    <property type="match status" value="1"/>
</dbReference>
<dbReference type="PANTHER" id="PTHR33678:SF1">
    <property type="entry name" value="BLL1576 PROTEIN"/>
    <property type="match status" value="1"/>
</dbReference>
<dbReference type="Pfam" id="PF03050">
    <property type="entry name" value="DDE_Tnp_IS66"/>
    <property type="match status" value="1"/>
</dbReference>
<organism>
    <name type="scientific">Sinorhizobium fredii (strain NBRC 101917 / NGR234)</name>
    <dbReference type="NCBI Taxonomy" id="394"/>
    <lineage>
        <taxon>Bacteria</taxon>
        <taxon>Pseudomonadati</taxon>
        <taxon>Pseudomonadota</taxon>
        <taxon>Alphaproteobacteria</taxon>
        <taxon>Hyphomicrobiales</taxon>
        <taxon>Rhizobiaceae</taxon>
        <taxon>Sinorhizobium/Ensifer group</taxon>
        <taxon>Sinorhizobium</taxon>
    </lineage>
</organism>
<feature type="chain" id="PRO_0000200881" description="Uncharacterized protein y4jO">
    <location>
        <begin position="1"/>
        <end position="321"/>
    </location>
</feature>
<reference key="1">
    <citation type="journal article" date="1997" name="Nature">
        <title>Molecular basis of symbiosis between Rhizobium and legumes.</title>
        <authorList>
            <person name="Freiberg C.A."/>
            <person name="Fellay R."/>
            <person name="Bairoch A."/>
            <person name="Broughton W.J."/>
            <person name="Rosenthal A."/>
            <person name="Perret X."/>
        </authorList>
    </citation>
    <scope>NUCLEOTIDE SEQUENCE [LARGE SCALE GENOMIC DNA]</scope>
    <source>
        <strain>NBRC 101917 / NGR234</strain>
    </source>
</reference>
<reference key="2">
    <citation type="journal article" date="2009" name="Appl. Environ. Microbiol.">
        <title>Rhizobium sp. strain NGR234 possesses a remarkable number of secretion systems.</title>
        <authorList>
            <person name="Schmeisser C."/>
            <person name="Liesegang H."/>
            <person name="Krysciak D."/>
            <person name="Bakkou N."/>
            <person name="Le Quere A."/>
            <person name="Wollherr A."/>
            <person name="Heinemeyer I."/>
            <person name="Morgenstern B."/>
            <person name="Pommerening-Roeser A."/>
            <person name="Flores M."/>
            <person name="Palacios R."/>
            <person name="Brenner S."/>
            <person name="Gottschalk G."/>
            <person name="Schmitz R.A."/>
            <person name="Broughton W.J."/>
            <person name="Perret X."/>
            <person name="Strittmatter A.W."/>
            <person name="Streit W.R."/>
        </authorList>
    </citation>
    <scope>NUCLEOTIDE SEQUENCE [LARGE SCALE GENOMIC DNA]</scope>
    <source>
        <strain>NBRC 101917 / NGR234</strain>
    </source>
</reference>
<geneLocation type="plasmid">
    <name>sym pNGR234a</name>
</geneLocation>